<keyword id="KW-0067">ATP-binding</keyword>
<keyword id="KW-0414">Isoprene biosynthesis</keyword>
<keyword id="KW-0444">Lipid biosynthesis</keyword>
<keyword id="KW-0443">Lipid metabolism</keyword>
<keyword id="KW-0456">Lyase</keyword>
<keyword id="KW-0547">Nucleotide-binding</keyword>
<keyword id="KW-1185">Reference proteome</keyword>
<accession>D4GXZ3</accession>
<sequence length="324" mass="35417">MKATAKAHPIQGLVKYHGMRDTERRMPYHDSISVCTAPSHTQTTVEFRPDADEDVYVIGGEEVEGRGAERIQAVVDRVRELAGFDHRVRLESENSFPSNIGFGSSASGFAAAAMALAEAADLDMTRPEVSTIARRGSASAARAVTGAFSHLYSGMNDTDCRSERIETDLEDDLRIVAAHVPAYKETEQAHAEAADSHMFQARMAHIHAQIDDMRDALYDGDFDAAFELAEHDSLSLAATTMTGPAGWVYWQPRTIAVFNAVRKLRNEEDVPVYFSTDTGASVYINTTEEHVDRVEEAVADCGVETDVWGVGGPAEVLDESEALF</sequence>
<evidence type="ECO:0000269" key="1">
    <source>
    </source>
</evidence>
<evidence type="ECO:0000305" key="2"/>
<gene>
    <name type="primary">mvaD</name>
    <name type="ordered locus">HVO_1412</name>
    <name type="ORF">C498_11676</name>
</gene>
<reference key="1">
    <citation type="journal article" date="2010" name="PLoS ONE">
        <title>The complete genome sequence of Haloferax volcanii DS2, a model archaeon.</title>
        <authorList>
            <person name="Hartman A.L."/>
            <person name="Norais C."/>
            <person name="Badger J.H."/>
            <person name="Delmas S."/>
            <person name="Haldenby S."/>
            <person name="Madupu R."/>
            <person name="Robinson J."/>
            <person name="Khouri H."/>
            <person name="Ren Q."/>
            <person name="Lowe T.M."/>
            <person name="Maupin-Furlow J."/>
            <person name="Pohlschroder M."/>
            <person name="Daniels C."/>
            <person name="Pfeiffer F."/>
            <person name="Allers T."/>
            <person name="Eisen J.A."/>
        </authorList>
    </citation>
    <scope>NUCLEOTIDE SEQUENCE [LARGE SCALE GENOMIC DNA]</scope>
    <source>
        <strain>ATCC 29605 / DSM 3757 / JCM 8879 / NBRC 14742 / NCIMB 2012 / VKM B-1768 / DS2</strain>
    </source>
</reference>
<reference key="2">
    <citation type="journal article" date="2014" name="PLoS Genet.">
        <title>Phylogenetically driven sequencing of extremely halophilic archaea reveals strategies for static and dynamic osmo-response.</title>
        <authorList>
            <person name="Becker E.A."/>
            <person name="Seitzer P.M."/>
            <person name="Tritt A."/>
            <person name="Larsen D."/>
            <person name="Krusor M."/>
            <person name="Yao A.I."/>
            <person name="Wu D."/>
            <person name="Madern D."/>
            <person name="Eisen J.A."/>
            <person name="Darling A.E."/>
            <person name="Facciotti M.T."/>
        </authorList>
    </citation>
    <scope>NUCLEOTIDE SEQUENCE [LARGE SCALE GENOMIC DNA]</scope>
    <source>
        <strain>ATCC 29605 / DSM 3757 / JCM 8879 / NBRC 14742 / NCIMB 2012 / VKM B-1768 / DS2</strain>
    </source>
</reference>
<reference key="3">
    <citation type="journal article" date="2014" name="J. Bacteriol.">
        <title>Identification in Haloferax volcanii of phosphomevalonate decarboxylase and isopentenyl phosphate kinase as catalysts of the terminal enzyme reactions in an archaeal alternate mevalonate pathway.</title>
        <authorList>
            <person name="Vannice J.C."/>
            <person name="Skaff D.A."/>
            <person name="Keightley A."/>
            <person name="Addo J.K."/>
            <person name="Wyckoff G.J."/>
            <person name="Miziorko H.M."/>
        </authorList>
    </citation>
    <scope>IDENTIFICATION</scope>
    <scope>FUNCTION</scope>
    <scope>CATALYTIC ACTIVITY</scope>
    <scope>BIOPHYSICOCHEMICAL PROPERTIES</scope>
    <scope>ACTIVITY REGULATION</scope>
    <scope>PATHWAY</scope>
    <source>
        <strain>DS2 / DS70</strain>
    </source>
</reference>
<protein>
    <recommendedName>
        <fullName>Phosphomevalonate decarboxylase</fullName>
        <shortName>PMD</shortName>
        <ecNumber evidence="1">4.1.1.99</ecNumber>
    </recommendedName>
    <alternativeName>
        <fullName>Mevalonate monophosphate decarboxylase</fullName>
    </alternativeName>
</protein>
<dbReference type="EC" id="4.1.1.99" evidence="1"/>
<dbReference type="EMBL" id="CP001956">
    <property type="protein sequence ID" value="ADE02509.1"/>
    <property type="molecule type" value="Genomic_DNA"/>
</dbReference>
<dbReference type="EMBL" id="AOHU01000090">
    <property type="protein sequence ID" value="ELY28351.1"/>
    <property type="molecule type" value="Genomic_DNA"/>
</dbReference>
<dbReference type="RefSeq" id="WP_004043526.1">
    <property type="nucleotide sequence ID" value="NC_013967.1"/>
</dbReference>
<dbReference type="SMR" id="D4GXZ3"/>
<dbReference type="STRING" id="309800.HVO_1412"/>
<dbReference type="PaxDb" id="309800-C498_11676"/>
<dbReference type="EnsemblBacteria" id="ADE02509">
    <property type="protein sequence ID" value="ADE02509"/>
    <property type="gene ID" value="HVO_1412"/>
</dbReference>
<dbReference type="GeneID" id="8926402"/>
<dbReference type="KEGG" id="hvo:HVO_1412"/>
<dbReference type="PATRIC" id="fig|309800.29.peg.2226"/>
<dbReference type="eggNOG" id="arCOG02937">
    <property type="taxonomic scope" value="Archaea"/>
</dbReference>
<dbReference type="HOGENOM" id="CLU_040369_0_0_2"/>
<dbReference type="OrthoDB" id="275333at2157"/>
<dbReference type="BioCyc" id="MetaCyc:MONOMER-18695"/>
<dbReference type="BRENDA" id="4.1.1.99">
    <property type="organism ID" value="2561"/>
</dbReference>
<dbReference type="Proteomes" id="UP000008243">
    <property type="component" value="Chromosome"/>
</dbReference>
<dbReference type="Proteomes" id="UP000011532">
    <property type="component" value="Unassembled WGS sequence"/>
</dbReference>
<dbReference type="GO" id="GO:0005524">
    <property type="term" value="F:ATP binding"/>
    <property type="evidence" value="ECO:0007669"/>
    <property type="project" value="UniProtKB-KW"/>
</dbReference>
<dbReference type="GO" id="GO:0090710">
    <property type="term" value="F:phosphomevalonate decarboxylase activity"/>
    <property type="evidence" value="ECO:0007669"/>
    <property type="project" value="UniProtKB-EC"/>
</dbReference>
<dbReference type="GO" id="GO:0008299">
    <property type="term" value="P:isoprenoid biosynthetic process"/>
    <property type="evidence" value="ECO:0007669"/>
    <property type="project" value="UniProtKB-KW"/>
</dbReference>
<dbReference type="Gene3D" id="3.30.230.10">
    <property type="match status" value="1"/>
</dbReference>
<dbReference type="Gene3D" id="3.30.70.890">
    <property type="entry name" value="GHMP kinase, C-terminal domain"/>
    <property type="match status" value="1"/>
</dbReference>
<dbReference type="InterPro" id="IPR036554">
    <property type="entry name" value="GHMP_kinase_C_sf"/>
</dbReference>
<dbReference type="InterPro" id="IPR005935">
    <property type="entry name" value="Mev_decarb"/>
</dbReference>
<dbReference type="InterPro" id="IPR049864">
    <property type="entry name" value="MvaD-like"/>
</dbReference>
<dbReference type="InterPro" id="IPR053859">
    <property type="entry name" value="MVD-like_N"/>
</dbReference>
<dbReference type="InterPro" id="IPR041431">
    <property type="entry name" value="Mvd1_C"/>
</dbReference>
<dbReference type="InterPro" id="IPR020568">
    <property type="entry name" value="Ribosomal_Su5_D2-typ_SF"/>
</dbReference>
<dbReference type="InterPro" id="IPR014721">
    <property type="entry name" value="Ribsml_uS5_D2-typ_fold_subgr"/>
</dbReference>
<dbReference type="NCBIfam" id="NF040704">
    <property type="entry name" value="IPP_alt_MvaD"/>
    <property type="match status" value="1"/>
</dbReference>
<dbReference type="PANTHER" id="PTHR10977">
    <property type="entry name" value="DIPHOSPHOMEVALONATE DECARBOXYLASE"/>
    <property type="match status" value="1"/>
</dbReference>
<dbReference type="PANTHER" id="PTHR10977:SF3">
    <property type="entry name" value="DIPHOSPHOMEVALONATE DECARBOXYLASE"/>
    <property type="match status" value="1"/>
</dbReference>
<dbReference type="Pfam" id="PF18376">
    <property type="entry name" value="MDD_C"/>
    <property type="match status" value="1"/>
</dbReference>
<dbReference type="Pfam" id="PF22700">
    <property type="entry name" value="MVD-like_N"/>
    <property type="match status" value="1"/>
</dbReference>
<dbReference type="PIRSF" id="PIRSF015950">
    <property type="entry name" value="Mev_P_decrbx"/>
    <property type="match status" value="1"/>
</dbReference>
<dbReference type="SUPFAM" id="SSF55060">
    <property type="entry name" value="GHMP Kinase, C-terminal domain"/>
    <property type="match status" value="1"/>
</dbReference>
<dbReference type="SUPFAM" id="SSF54211">
    <property type="entry name" value="Ribosomal protein S5 domain 2-like"/>
    <property type="match status" value="1"/>
</dbReference>
<feature type="chain" id="PRO_0000429253" description="Phosphomevalonate decarboxylase">
    <location>
        <begin position="1"/>
        <end position="324"/>
    </location>
</feature>
<organism>
    <name type="scientific">Haloferax volcanii (strain ATCC 29605 / DSM 3757 / JCM 8879 / NBRC 14742 / NCIMB 2012 / VKM B-1768 / DS2)</name>
    <name type="common">Halobacterium volcanii</name>
    <dbReference type="NCBI Taxonomy" id="309800"/>
    <lineage>
        <taxon>Archaea</taxon>
        <taxon>Methanobacteriati</taxon>
        <taxon>Methanobacteriota</taxon>
        <taxon>Stenosarchaea group</taxon>
        <taxon>Halobacteria</taxon>
        <taxon>Halobacteriales</taxon>
        <taxon>Haloferacaceae</taxon>
        <taxon>Haloferax</taxon>
    </lineage>
</organism>
<proteinExistence type="evidence at protein level"/>
<comment type="function">
    <text evidence="1">Catalyzes the decarboxylation of mevalonate 5-phosphate (MVAP) to isopentenyl phosphate (IP). Functions in an alternate mevalonate (MVA) pathway leading to isopentenyl diphosphate (IPP), a key precursor for the biosynthesis of isoprenoid compounds such as archaeal membrane lipids.</text>
</comment>
<comment type="catalytic activity">
    <reaction evidence="1">
        <text>(R)-5-phosphomevalonate + ATP = isopentenyl phosphate + ADP + phosphate + CO2</text>
        <dbReference type="Rhea" id="RHEA:40955"/>
        <dbReference type="ChEBI" id="CHEBI:16526"/>
        <dbReference type="ChEBI" id="CHEBI:30616"/>
        <dbReference type="ChEBI" id="CHEBI:43474"/>
        <dbReference type="ChEBI" id="CHEBI:58146"/>
        <dbReference type="ChEBI" id="CHEBI:65078"/>
        <dbReference type="ChEBI" id="CHEBI:456216"/>
        <dbReference type="EC" id="4.1.1.99"/>
    </reaction>
</comment>
<comment type="activity regulation">
    <text evidence="1">Is strongly inhibited by 6-fluoromevalonate monophosphate but shows negligible inhibition by 6-fluoromevalonate diphosphate (a potent inhibitor of the classical mevalonate pathway).</text>
</comment>
<comment type="biophysicochemical properties">
    <kinetics>
        <KM evidence="1">159 uM for (R,S)-5-phosphomevalonate</KM>
        <KM evidence="1">75 uM for (R)-5-phosphomevalonate</KM>
        <KM evidence="1">289 uM for ATP</KM>
        <Vmax evidence="1">5.6 umol/min/mg enzyme</Vmax>
        <text>kcat is 3.5 sec(-1).</text>
    </kinetics>
    <phDependence>
        <text evidence="1">Optimum pH is about 7.5.</text>
    </phDependence>
</comment>
<comment type="similarity">
    <text evidence="2">Belongs to the phosphomevalonate decarboxylase family.</text>
</comment>
<name>PMD_HALVD</name>